<geneLocation type="chloroplast"/>
<keyword id="KW-0002">3D-structure</keyword>
<keyword id="KW-0004">4Fe-4S</keyword>
<keyword id="KW-0148">Chlorophyll</keyword>
<keyword id="KW-0150">Chloroplast</keyword>
<keyword id="KW-0157">Chromophore</keyword>
<keyword id="KW-0249">Electron transport</keyword>
<keyword id="KW-0408">Iron</keyword>
<keyword id="KW-0411">Iron-sulfur</keyword>
<keyword id="KW-0460">Magnesium</keyword>
<keyword id="KW-0472">Membrane</keyword>
<keyword id="KW-0479">Metal-binding</keyword>
<keyword id="KW-0560">Oxidoreductase</keyword>
<keyword id="KW-0602">Photosynthesis</keyword>
<keyword id="KW-0603">Photosystem I</keyword>
<keyword id="KW-0934">Plastid</keyword>
<keyword id="KW-1185">Reference proteome</keyword>
<keyword id="KW-0793">Thylakoid</keyword>
<keyword id="KW-0812">Transmembrane</keyword>
<keyword id="KW-1133">Transmembrane helix</keyword>
<keyword id="KW-0813">Transport</keyword>
<sequence length="734" mass="82429">MALRFPRFSQGLAQDPTTRRIWFGIATAHDFESHDDITEERLYQNIFASHFGQLAIIFLWTSGNLFHVAWQGNFESWVQDPLHVRPIAHAIWDPHFGQPAVEAFTRGGALGPVNIAYSGVYQWWYTIGLRTNEDLYTGALFLLFLSVISLLGGWLHLQPKWKPSVSWFKNAESRLNHHLSGLFGVSSLAWTGHLVHVAIPGSRGEYVRWNNFLDVLPHPQGLGPLFTGQWNLYAQNPDSSSHLFGTSQGAGTAILTLLGGFHPQTQSLWLTDMAHHHLAIAFVFLVAGHMYRTNFGIGHSMKDLLEAHIPPGGRLGRGHKGLYDTINNSLHFQLGLALASLGVITSLVAQHMYSLPAYAFIAQDFTTQAALYTHHQYIAGFIMTGAFAHGAIFFIRDYNPEQNEDNVLARMLDHKEAIISHLSWASLFLGFHTLGLYVHNDVMLAFGTPEKQILIEPIFAQWIQSAHGKTSYGFDVLLSSTSGPAFNAGRSIWLPGWLNAVNENSNSLFLTIGPGDFLVHHAIALGLHTTTLILVKGALDARGSKLMPDKKDFGYSFPCDGPGRGGTCDISAWDAFYLAVFWMLNTIGWVTFYWHWKHITLWQGNVSQFNESSTYLMGWLRDYLWLNSSQLINGYNPFGMNSLSVWAWMFLFGHLVWATGFMFLISWRGYWQELIETLAWAHERTPLANLIRWRDKPVALSIVQARLVGLAHFSVGYIFTYAAFLIASTSGKFG</sequence>
<gene>
    <name evidence="1" type="primary">psaB</name>
</gene>
<dbReference type="EC" id="1.97.1.12" evidence="1"/>
<dbReference type="EMBL" id="AJ400848">
    <property type="protein sequence ID" value="CAB88725.1"/>
    <property type="molecule type" value="Genomic_DNA"/>
</dbReference>
<dbReference type="PIR" id="S00445">
    <property type="entry name" value="S00445"/>
</dbReference>
<dbReference type="RefSeq" id="NP_054932.1">
    <property type="nucleotide sequence ID" value="NC_002202.1"/>
</dbReference>
<dbReference type="PDB" id="9GRX">
    <property type="method" value="EM"/>
    <property type="resolution" value="3.19 A"/>
    <property type="chains" value="b=2-734"/>
</dbReference>
<dbReference type="PDBsum" id="9GRX"/>
<dbReference type="EMDB" id="EMD-51527"/>
<dbReference type="SMR" id="P06512"/>
<dbReference type="FunCoup" id="P06512">
    <property type="interactions" value="262"/>
</dbReference>
<dbReference type="STRING" id="3562.P06512"/>
<dbReference type="GeneID" id="2715603"/>
<dbReference type="KEGG" id="soe:2715603"/>
<dbReference type="InParanoid" id="P06512"/>
<dbReference type="OrthoDB" id="349at2759"/>
<dbReference type="BRENDA" id="1.97.1.12">
    <property type="organism ID" value="5812"/>
</dbReference>
<dbReference type="Proteomes" id="UP001155700">
    <property type="component" value="Chloroplast Pltd"/>
</dbReference>
<dbReference type="GO" id="GO:0009535">
    <property type="term" value="C:chloroplast thylakoid membrane"/>
    <property type="evidence" value="ECO:0007669"/>
    <property type="project" value="UniProtKB-SubCell"/>
</dbReference>
<dbReference type="GO" id="GO:0009522">
    <property type="term" value="C:photosystem I"/>
    <property type="evidence" value="ECO:0007669"/>
    <property type="project" value="UniProtKB-KW"/>
</dbReference>
<dbReference type="GO" id="GO:0051539">
    <property type="term" value="F:4 iron, 4 sulfur cluster binding"/>
    <property type="evidence" value="ECO:0007669"/>
    <property type="project" value="UniProtKB-KW"/>
</dbReference>
<dbReference type="GO" id="GO:0016168">
    <property type="term" value="F:chlorophyll binding"/>
    <property type="evidence" value="ECO:0007669"/>
    <property type="project" value="UniProtKB-KW"/>
</dbReference>
<dbReference type="GO" id="GO:0009055">
    <property type="term" value="F:electron transfer activity"/>
    <property type="evidence" value="ECO:0007669"/>
    <property type="project" value="UniProtKB-UniRule"/>
</dbReference>
<dbReference type="GO" id="GO:0000287">
    <property type="term" value="F:magnesium ion binding"/>
    <property type="evidence" value="ECO:0007669"/>
    <property type="project" value="UniProtKB-UniRule"/>
</dbReference>
<dbReference type="GO" id="GO:0016491">
    <property type="term" value="F:oxidoreductase activity"/>
    <property type="evidence" value="ECO:0007669"/>
    <property type="project" value="UniProtKB-KW"/>
</dbReference>
<dbReference type="GO" id="GO:0015979">
    <property type="term" value="P:photosynthesis"/>
    <property type="evidence" value="ECO:0007669"/>
    <property type="project" value="UniProtKB-UniRule"/>
</dbReference>
<dbReference type="FunFam" id="1.20.1130.10:FF:000001">
    <property type="entry name" value="Photosystem I P700 chlorophyll a apoprotein A2"/>
    <property type="match status" value="1"/>
</dbReference>
<dbReference type="Gene3D" id="1.20.1130.10">
    <property type="entry name" value="Photosystem I PsaA/PsaB"/>
    <property type="match status" value="1"/>
</dbReference>
<dbReference type="HAMAP" id="MF_00482">
    <property type="entry name" value="PSI_PsaB"/>
    <property type="match status" value="1"/>
</dbReference>
<dbReference type="InterPro" id="IPR001280">
    <property type="entry name" value="PSI_PsaA/B"/>
</dbReference>
<dbReference type="InterPro" id="IPR020586">
    <property type="entry name" value="PSI_PsaA/B_CS"/>
</dbReference>
<dbReference type="InterPro" id="IPR036408">
    <property type="entry name" value="PSI_PsaA/B_sf"/>
</dbReference>
<dbReference type="InterPro" id="IPR006244">
    <property type="entry name" value="PSI_PsaB"/>
</dbReference>
<dbReference type="NCBIfam" id="TIGR01336">
    <property type="entry name" value="psaB"/>
    <property type="match status" value="1"/>
</dbReference>
<dbReference type="PANTHER" id="PTHR30128">
    <property type="entry name" value="OUTER MEMBRANE PROTEIN, OMPA-RELATED"/>
    <property type="match status" value="1"/>
</dbReference>
<dbReference type="PANTHER" id="PTHR30128:SF19">
    <property type="entry name" value="PHOTOSYSTEM I P700 CHLOROPHYLL A APOPROTEIN A1-RELATED"/>
    <property type="match status" value="1"/>
</dbReference>
<dbReference type="Pfam" id="PF00223">
    <property type="entry name" value="PsaA_PsaB"/>
    <property type="match status" value="1"/>
</dbReference>
<dbReference type="PIRSF" id="PIRSF002905">
    <property type="entry name" value="PSI_A"/>
    <property type="match status" value="1"/>
</dbReference>
<dbReference type="PRINTS" id="PR00257">
    <property type="entry name" value="PHOTSYSPSAAB"/>
</dbReference>
<dbReference type="SUPFAM" id="SSF81558">
    <property type="entry name" value="Photosystem I subunits PsaA/PsaB"/>
    <property type="match status" value="1"/>
</dbReference>
<dbReference type="PROSITE" id="PS00419">
    <property type="entry name" value="PHOTOSYSTEM_I_PSAAB"/>
    <property type="match status" value="1"/>
</dbReference>
<comment type="function">
    <text evidence="1">PsaA and PsaB bind P700, the primary electron donor of photosystem I (PSI), as well as the electron acceptors A0, A1 and FX. PSI is a plastocyanin-ferredoxin oxidoreductase, converting photonic excitation into a charge separation, which transfers an electron from the donor P700 chlorophyll pair to the spectroscopically characterized acceptors A0, A1, FX, FA and FB in turn. Oxidized P700 is reduced on the lumenal side of the thylakoid membrane by plastocyanin.</text>
</comment>
<comment type="catalytic activity">
    <reaction evidence="1">
        <text>reduced [plastocyanin] + hnu + oxidized [2Fe-2S]-[ferredoxin] = oxidized [plastocyanin] + reduced [2Fe-2S]-[ferredoxin]</text>
        <dbReference type="Rhea" id="RHEA:30407"/>
        <dbReference type="Rhea" id="RHEA-COMP:10000"/>
        <dbReference type="Rhea" id="RHEA-COMP:10001"/>
        <dbReference type="Rhea" id="RHEA-COMP:10039"/>
        <dbReference type="Rhea" id="RHEA-COMP:10040"/>
        <dbReference type="ChEBI" id="CHEBI:29036"/>
        <dbReference type="ChEBI" id="CHEBI:30212"/>
        <dbReference type="ChEBI" id="CHEBI:33737"/>
        <dbReference type="ChEBI" id="CHEBI:33738"/>
        <dbReference type="ChEBI" id="CHEBI:49552"/>
        <dbReference type="EC" id="1.97.1.12"/>
    </reaction>
</comment>
<comment type="cofactor">
    <text evidence="1">P700 is a chlorophyll a/chlorophyll a' dimer, A0 is one or more chlorophyll a, A1 is one or both phylloquinones and FX is a shared 4Fe-4S iron-sulfur center.</text>
</comment>
<comment type="subunit">
    <text>The PsaA/B heterodimer binds the P700 chlorophyll special pair and subsequent electron acceptors. PSI consists of a core antenna complex that captures photons, and an electron transfer chain that converts photonic excitation into a charge separation. The eukaryotic PSI reaction center is composed of at least 11 subunits.</text>
</comment>
<comment type="subcellular location">
    <subcellularLocation>
        <location>Plastid</location>
        <location>Chloroplast thylakoid membrane</location>
        <topology>Multi-pass membrane protein</topology>
    </subcellularLocation>
</comment>
<comment type="similarity">
    <text evidence="1">Belongs to the PsaA/PsaB family.</text>
</comment>
<protein>
    <recommendedName>
        <fullName evidence="1">Photosystem I P700 chlorophyll a apoprotein A2</fullName>
        <ecNumber evidence="1">1.97.1.12</ecNumber>
    </recommendedName>
    <alternativeName>
        <fullName evidence="1">PSI-B</fullName>
    </alternativeName>
    <alternativeName>
        <fullName evidence="1">PsaB</fullName>
    </alternativeName>
</protein>
<reference key="1">
    <citation type="journal article" date="1986" name="Curr. Genet.">
        <title>Nucleotide sequence of the clustered genes for two P700 chlorophyll a apoproteins of the photosystem I reaction center and the ribosomal protein S14 of the spinach plastid chromosome.</title>
        <authorList>
            <person name="Kirsch W."/>
            <person name="Seyer P."/>
            <person name="Herrmann R.G."/>
        </authorList>
    </citation>
    <scope>NUCLEOTIDE SEQUENCE [GENOMIC DNA]</scope>
    <source>
        <strain>cv. Geant d'hiver</strain>
        <strain>cv. Monatol</strain>
    </source>
</reference>
<reference key="2">
    <citation type="journal article" date="2001" name="Plant Mol. Biol.">
        <title>The plastid chromosome of spinach (Spinacia oleracea): complete nucleotide sequence and gene organization.</title>
        <authorList>
            <person name="Schmitz-Linneweber C."/>
            <person name="Maier R.M."/>
            <person name="Alcaraz J.-P."/>
            <person name="Cottet A."/>
            <person name="Herrmann R.G."/>
            <person name="Mache R."/>
        </authorList>
    </citation>
    <scope>NUCLEOTIDE SEQUENCE [LARGE SCALE GENOMIC DNA]</scope>
    <source>
        <strain>cv. Geant d'hiver</strain>
        <strain>cv. Monatol</strain>
    </source>
</reference>
<reference key="3">
    <citation type="journal article" date="1998" name="J. Biol. Chem.">
        <title>Three-dimensional structure of higher plant photosystem I determined by electron crystallography.</title>
        <authorList>
            <person name="Kitmitto A."/>
            <person name="Mustafa A.O."/>
            <person name="Holzenburg A."/>
            <person name="Ford R.C."/>
        </authorList>
    </citation>
    <scope>3D-STRUCTURE MODELING</scope>
</reference>
<reference key="4">
    <citation type="journal article" date="2003" name="Eur. J. Biochem.">
        <title>Reversed-phase HPLC determination of chlorophyll a' and phylloquinone in photosystem I of oxygenic photosynthetic organisms.</title>
        <authorList>
            <person name="Nakamura A."/>
            <person name="Akai M."/>
            <person name="Yoshida E."/>
            <person name="Taki T."/>
            <person name="Watanabe T."/>
        </authorList>
    </citation>
    <scope>PRESENCE OF CHLOROPHYLL A' IN PSI</scope>
</reference>
<proteinExistence type="evidence at protein level"/>
<organism>
    <name type="scientific">Spinacia oleracea</name>
    <name type="common">Spinach</name>
    <dbReference type="NCBI Taxonomy" id="3562"/>
    <lineage>
        <taxon>Eukaryota</taxon>
        <taxon>Viridiplantae</taxon>
        <taxon>Streptophyta</taxon>
        <taxon>Embryophyta</taxon>
        <taxon>Tracheophyta</taxon>
        <taxon>Spermatophyta</taxon>
        <taxon>Magnoliopsida</taxon>
        <taxon>eudicotyledons</taxon>
        <taxon>Gunneridae</taxon>
        <taxon>Pentapetalae</taxon>
        <taxon>Caryophyllales</taxon>
        <taxon>Chenopodiaceae</taxon>
        <taxon>Chenopodioideae</taxon>
        <taxon>Anserineae</taxon>
        <taxon>Spinacia</taxon>
    </lineage>
</organism>
<name>PSAB_SPIOL</name>
<feature type="chain" id="PRO_0000088638" description="Photosystem I P700 chlorophyll a apoprotein A2">
    <location>
        <begin position="1"/>
        <end position="734"/>
    </location>
</feature>
<feature type="transmembrane region" description="Helical; Name=I" evidence="1">
    <location>
        <begin position="46"/>
        <end position="69"/>
    </location>
</feature>
<feature type="transmembrane region" description="Helical; Name=II" evidence="1">
    <location>
        <begin position="135"/>
        <end position="158"/>
    </location>
</feature>
<feature type="transmembrane region" description="Helical; Name=III" evidence="1">
    <location>
        <begin position="175"/>
        <end position="199"/>
    </location>
</feature>
<feature type="transmembrane region" description="Helical; Name=IV" evidence="1">
    <location>
        <begin position="273"/>
        <end position="291"/>
    </location>
</feature>
<feature type="transmembrane region" description="Helical; Name=V" evidence="1">
    <location>
        <begin position="330"/>
        <end position="353"/>
    </location>
</feature>
<feature type="transmembrane region" description="Helical; Name=VI" evidence="1">
    <location>
        <begin position="369"/>
        <end position="395"/>
    </location>
</feature>
<feature type="transmembrane region" description="Helical; Name=VII" evidence="1">
    <location>
        <begin position="417"/>
        <end position="439"/>
    </location>
</feature>
<feature type="transmembrane region" description="Helical; Name=VIII" evidence="1">
    <location>
        <begin position="517"/>
        <end position="535"/>
    </location>
</feature>
<feature type="transmembrane region" description="Helical; Name=IX" evidence="1">
    <location>
        <begin position="575"/>
        <end position="596"/>
    </location>
</feature>
<feature type="transmembrane region" description="Helical; Name=X" evidence="1">
    <location>
        <begin position="643"/>
        <end position="665"/>
    </location>
</feature>
<feature type="transmembrane region" description="Helical; Name=XI" evidence="1">
    <location>
        <begin position="707"/>
        <end position="727"/>
    </location>
</feature>
<feature type="binding site" evidence="1">
    <location>
        <position position="559"/>
    </location>
    <ligand>
        <name>[4Fe-4S] cluster</name>
        <dbReference type="ChEBI" id="CHEBI:49883"/>
        <note>ligand shared between dimeric partners</note>
    </ligand>
</feature>
<feature type="binding site" evidence="1">
    <location>
        <position position="568"/>
    </location>
    <ligand>
        <name>[4Fe-4S] cluster</name>
        <dbReference type="ChEBI" id="CHEBI:49883"/>
        <note>ligand shared between dimeric partners</note>
    </ligand>
</feature>
<feature type="binding site" description="axial binding residue" evidence="1">
    <location>
        <position position="654"/>
    </location>
    <ligand>
        <name>chlorophyll a</name>
        <dbReference type="ChEBI" id="CHEBI:58416"/>
        <label>B1</label>
    </ligand>
    <ligandPart>
        <name>Mg</name>
        <dbReference type="ChEBI" id="CHEBI:25107"/>
    </ligandPart>
</feature>
<feature type="binding site" description="axial binding residue" evidence="1">
    <location>
        <position position="662"/>
    </location>
    <ligand>
        <name>chlorophyll a</name>
        <dbReference type="ChEBI" id="CHEBI:58416"/>
        <label>B3</label>
    </ligand>
    <ligandPart>
        <name>Mg</name>
        <dbReference type="ChEBI" id="CHEBI:25107"/>
    </ligandPart>
</feature>
<feature type="binding site" evidence="1">
    <location>
        <position position="670"/>
    </location>
    <ligand>
        <name>chlorophyll a</name>
        <dbReference type="ChEBI" id="CHEBI:58416"/>
        <label>B3</label>
    </ligand>
</feature>
<feature type="binding site" evidence="1">
    <location>
        <position position="671"/>
    </location>
    <ligand>
        <name>phylloquinone</name>
        <dbReference type="ChEBI" id="CHEBI:18067"/>
        <label>B</label>
    </ligand>
</feature>
<accession>P06512</accession>
<evidence type="ECO:0000255" key="1">
    <source>
        <dbReference type="HAMAP-Rule" id="MF_00482"/>
    </source>
</evidence>